<name>SYL_STRSV</name>
<sequence length="833" mass="94312">MAYYNHKEIEPKWQKYWAEHHTFKTGTDKDKPNFYALDMFPYPSGAGLHVGHPEGYTATDILSRYKRTQGYNVLHPMGWDAFGLPAEQYAMDTGNDPADFTAENIANFKRQINALGFSYDWDREINTTDPNYYKWTQWIFTKLYEKGLAYEAEVPVNWVEELGTAIANEEVLPDGTSERGGYPVVRKPMRQWMLKITAYAERLLNDLEELDWPESIKDMQRNWIGKSTGANVTFKIKDTDKDFTVFTTRPDTLFGATYAVLAPEHALVDAITSAEQAQAVADYKHAASLKSDLARTDLAKDKTGVWTGAYAINPVNGKEIPIWIADYVLASYGTGAIMAVPAHDERDWEFAKQFDLEIIPVLEGGNVAEAAYTEDGPHINSGFLDGLDKAAAIDKMVAWLEAEGVGNEKVTYRLRDWLFSRQRYWGEPIPIIHWEDGTSTAVPENELPLVLPVTKDIRPSGTGESPLANLTDWLEVTREDGVKGRRETNTMPQWAGSSWYYLRYIDPHNNEKLADEELLKAWLPVDIYIGGAEHAVLHLLYARFWHKFLYDIGVVPTKEPFQKLFNQGMILGTSYRDSRCALVATDKVEKRDGSFFNIETGEELEQAPAKMSKSLKNVVNPDDVVEQYGADTLRVYEMFMGPLDASIAWSEEGLEGSRKFLDRVYRLFNSKELVTENSGALDKVYHETVKSVTEQIEELKFNTAIAQLMIFVNAANKEEKLYVEYAKGFIQLLAPFAPHLAEELWQAVAQTGESISYVTWPTYDESKLVEAEVEIVVQIKGKVRAKLVVAKDLSREELQEIALSDEKIKSEIAGKEIVKVISVPNKLVNIVVK</sequence>
<proteinExistence type="inferred from homology"/>
<keyword id="KW-0030">Aminoacyl-tRNA synthetase</keyword>
<keyword id="KW-0067">ATP-binding</keyword>
<keyword id="KW-0963">Cytoplasm</keyword>
<keyword id="KW-0436">Ligase</keyword>
<keyword id="KW-0547">Nucleotide-binding</keyword>
<keyword id="KW-0648">Protein biosynthesis</keyword>
<keyword id="KW-1185">Reference proteome</keyword>
<accession>A3CKP1</accession>
<comment type="catalytic activity">
    <reaction evidence="1">
        <text>tRNA(Leu) + L-leucine + ATP = L-leucyl-tRNA(Leu) + AMP + diphosphate</text>
        <dbReference type="Rhea" id="RHEA:11688"/>
        <dbReference type="Rhea" id="RHEA-COMP:9613"/>
        <dbReference type="Rhea" id="RHEA-COMP:9622"/>
        <dbReference type="ChEBI" id="CHEBI:30616"/>
        <dbReference type="ChEBI" id="CHEBI:33019"/>
        <dbReference type="ChEBI" id="CHEBI:57427"/>
        <dbReference type="ChEBI" id="CHEBI:78442"/>
        <dbReference type="ChEBI" id="CHEBI:78494"/>
        <dbReference type="ChEBI" id="CHEBI:456215"/>
        <dbReference type="EC" id="6.1.1.4"/>
    </reaction>
</comment>
<comment type="subcellular location">
    <subcellularLocation>
        <location evidence="1">Cytoplasm</location>
    </subcellularLocation>
</comment>
<comment type="similarity">
    <text evidence="1">Belongs to the class-I aminoacyl-tRNA synthetase family.</text>
</comment>
<comment type="sequence caution" evidence="2">
    <conflict type="erroneous initiation">
        <sequence resource="EMBL-CDS" id="ABN43746"/>
    </conflict>
</comment>
<organism>
    <name type="scientific">Streptococcus sanguinis (strain SK36)</name>
    <dbReference type="NCBI Taxonomy" id="388919"/>
    <lineage>
        <taxon>Bacteria</taxon>
        <taxon>Bacillati</taxon>
        <taxon>Bacillota</taxon>
        <taxon>Bacilli</taxon>
        <taxon>Lactobacillales</taxon>
        <taxon>Streptococcaceae</taxon>
        <taxon>Streptococcus</taxon>
    </lineage>
</organism>
<dbReference type="EC" id="6.1.1.4" evidence="1"/>
<dbReference type="EMBL" id="CP000387">
    <property type="protein sequence ID" value="ABN43746.1"/>
    <property type="status" value="ALT_INIT"/>
    <property type="molecule type" value="Genomic_DNA"/>
</dbReference>
<dbReference type="RefSeq" id="WP_033179107.1">
    <property type="nucleotide sequence ID" value="NC_009009.1"/>
</dbReference>
<dbReference type="RefSeq" id="YP_001034296.1">
    <property type="nucleotide sequence ID" value="NC_009009.1"/>
</dbReference>
<dbReference type="SMR" id="A3CKP1"/>
<dbReference type="STRING" id="388919.SSA_0289"/>
<dbReference type="KEGG" id="ssa:SSA_0289"/>
<dbReference type="PATRIC" id="fig|388919.9.peg.279"/>
<dbReference type="eggNOG" id="COG0495">
    <property type="taxonomic scope" value="Bacteria"/>
</dbReference>
<dbReference type="HOGENOM" id="CLU_004427_0_0_9"/>
<dbReference type="OrthoDB" id="9810365at2"/>
<dbReference type="Proteomes" id="UP000002148">
    <property type="component" value="Chromosome"/>
</dbReference>
<dbReference type="GO" id="GO:0005829">
    <property type="term" value="C:cytosol"/>
    <property type="evidence" value="ECO:0007669"/>
    <property type="project" value="TreeGrafter"/>
</dbReference>
<dbReference type="GO" id="GO:0002161">
    <property type="term" value="F:aminoacyl-tRNA deacylase activity"/>
    <property type="evidence" value="ECO:0007669"/>
    <property type="project" value="InterPro"/>
</dbReference>
<dbReference type="GO" id="GO:0005524">
    <property type="term" value="F:ATP binding"/>
    <property type="evidence" value="ECO:0007669"/>
    <property type="project" value="UniProtKB-UniRule"/>
</dbReference>
<dbReference type="GO" id="GO:0004823">
    <property type="term" value="F:leucine-tRNA ligase activity"/>
    <property type="evidence" value="ECO:0007669"/>
    <property type="project" value="UniProtKB-UniRule"/>
</dbReference>
<dbReference type="GO" id="GO:0006429">
    <property type="term" value="P:leucyl-tRNA aminoacylation"/>
    <property type="evidence" value="ECO:0007669"/>
    <property type="project" value="UniProtKB-UniRule"/>
</dbReference>
<dbReference type="CDD" id="cd07958">
    <property type="entry name" value="Anticodon_Ia_Leu_BEm"/>
    <property type="match status" value="1"/>
</dbReference>
<dbReference type="CDD" id="cd00812">
    <property type="entry name" value="LeuRS_core"/>
    <property type="match status" value="1"/>
</dbReference>
<dbReference type="FunFam" id="1.10.730.10:FF:000012">
    <property type="entry name" value="Leucine--tRNA ligase"/>
    <property type="match status" value="1"/>
</dbReference>
<dbReference type="FunFam" id="3.40.50.620:FF:000056">
    <property type="entry name" value="Leucine--tRNA ligase"/>
    <property type="match status" value="1"/>
</dbReference>
<dbReference type="FunFam" id="3.40.50.620:FF:000077">
    <property type="entry name" value="Leucine--tRNA ligase"/>
    <property type="match status" value="1"/>
</dbReference>
<dbReference type="FunFam" id="1.10.730.10:FF:000011">
    <property type="entry name" value="Leucine--tRNA ligase chloroplastic/mitochondrial"/>
    <property type="match status" value="1"/>
</dbReference>
<dbReference type="Gene3D" id="3.40.50.620">
    <property type="entry name" value="HUPs"/>
    <property type="match status" value="2"/>
</dbReference>
<dbReference type="Gene3D" id="1.10.730.10">
    <property type="entry name" value="Isoleucyl-tRNA Synthetase, Domain 1"/>
    <property type="match status" value="1"/>
</dbReference>
<dbReference type="Gene3D" id="3.90.740.10">
    <property type="entry name" value="Valyl/Leucyl/Isoleucyl-tRNA synthetase, editing domain"/>
    <property type="match status" value="1"/>
</dbReference>
<dbReference type="HAMAP" id="MF_00049_B">
    <property type="entry name" value="Leu_tRNA_synth_B"/>
    <property type="match status" value="1"/>
</dbReference>
<dbReference type="InterPro" id="IPR001412">
    <property type="entry name" value="aa-tRNA-synth_I_CS"/>
</dbReference>
<dbReference type="InterPro" id="IPR002300">
    <property type="entry name" value="aa-tRNA-synth_Ia"/>
</dbReference>
<dbReference type="InterPro" id="IPR002302">
    <property type="entry name" value="Leu-tRNA-ligase"/>
</dbReference>
<dbReference type="InterPro" id="IPR025709">
    <property type="entry name" value="Leu_tRNA-synth_edit"/>
</dbReference>
<dbReference type="InterPro" id="IPR013155">
    <property type="entry name" value="M/V/L/I-tRNA-synth_anticd-bd"/>
</dbReference>
<dbReference type="InterPro" id="IPR015413">
    <property type="entry name" value="Methionyl/Leucyl_tRNA_Synth"/>
</dbReference>
<dbReference type="InterPro" id="IPR014729">
    <property type="entry name" value="Rossmann-like_a/b/a_fold"/>
</dbReference>
<dbReference type="InterPro" id="IPR009080">
    <property type="entry name" value="tRNAsynth_Ia_anticodon-bd"/>
</dbReference>
<dbReference type="InterPro" id="IPR009008">
    <property type="entry name" value="Val/Leu/Ile-tRNA-synth_edit"/>
</dbReference>
<dbReference type="NCBIfam" id="TIGR00396">
    <property type="entry name" value="leuS_bact"/>
    <property type="match status" value="1"/>
</dbReference>
<dbReference type="PANTHER" id="PTHR43740:SF2">
    <property type="entry name" value="LEUCINE--TRNA LIGASE, MITOCHONDRIAL"/>
    <property type="match status" value="1"/>
</dbReference>
<dbReference type="PANTHER" id="PTHR43740">
    <property type="entry name" value="LEUCYL-TRNA SYNTHETASE"/>
    <property type="match status" value="1"/>
</dbReference>
<dbReference type="Pfam" id="PF08264">
    <property type="entry name" value="Anticodon_1"/>
    <property type="match status" value="1"/>
</dbReference>
<dbReference type="Pfam" id="PF00133">
    <property type="entry name" value="tRNA-synt_1"/>
    <property type="match status" value="2"/>
</dbReference>
<dbReference type="Pfam" id="PF13603">
    <property type="entry name" value="tRNA-synt_1_2"/>
    <property type="match status" value="1"/>
</dbReference>
<dbReference type="Pfam" id="PF09334">
    <property type="entry name" value="tRNA-synt_1g"/>
    <property type="match status" value="1"/>
</dbReference>
<dbReference type="PRINTS" id="PR00985">
    <property type="entry name" value="TRNASYNTHLEU"/>
</dbReference>
<dbReference type="SUPFAM" id="SSF47323">
    <property type="entry name" value="Anticodon-binding domain of a subclass of class I aminoacyl-tRNA synthetases"/>
    <property type="match status" value="1"/>
</dbReference>
<dbReference type="SUPFAM" id="SSF52374">
    <property type="entry name" value="Nucleotidylyl transferase"/>
    <property type="match status" value="1"/>
</dbReference>
<dbReference type="SUPFAM" id="SSF50677">
    <property type="entry name" value="ValRS/IleRS/LeuRS editing domain"/>
    <property type="match status" value="1"/>
</dbReference>
<dbReference type="PROSITE" id="PS00178">
    <property type="entry name" value="AA_TRNA_LIGASE_I"/>
    <property type="match status" value="1"/>
</dbReference>
<protein>
    <recommendedName>
        <fullName evidence="1">Leucine--tRNA ligase</fullName>
        <ecNumber evidence="1">6.1.1.4</ecNumber>
    </recommendedName>
    <alternativeName>
        <fullName evidence="1">Leucyl-tRNA synthetase</fullName>
        <shortName evidence="1">LeuRS</shortName>
    </alternativeName>
</protein>
<evidence type="ECO:0000255" key="1">
    <source>
        <dbReference type="HAMAP-Rule" id="MF_00049"/>
    </source>
</evidence>
<evidence type="ECO:0000305" key="2"/>
<feature type="chain" id="PRO_0000334825" description="Leucine--tRNA ligase">
    <location>
        <begin position="1"/>
        <end position="833"/>
    </location>
</feature>
<feature type="short sequence motif" description="'HIGH' region">
    <location>
        <begin position="41"/>
        <end position="52"/>
    </location>
</feature>
<feature type="short sequence motif" description="'KMSKS' region">
    <location>
        <begin position="610"/>
        <end position="614"/>
    </location>
</feature>
<feature type="binding site" evidence="1">
    <location>
        <position position="613"/>
    </location>
    <ligand>
        <name>ATP</name>
        <dbReference type="ChEBI" id="CHEBI:30616"/>
    </ligand>
</feature>
<gene>
    <name evidence="1" type="primary">leuS</name>
    <name type="ordered locus">SSA_0289</name>
</gene>
<reference key="1">
    <citation type="journal article" date="2007" name="J. Bacteriol.">
        <title>Genome of the opportunistic pathogen Streptococcus sanguinis.</title>
        <authorList>
            <person name="Xu P."/>
            <person name="Alves J.M."/>
            <person name="Kitten T."/>
            <person name="Brown A."/>
            <person name="Chen Z."/>
            <person name="Ozaki L.S."/>
            <person name="Manque P."/>
            <person name="Ge X."/>
            <person name="Serrano M.G."/>
            <person name="Puiu D."/>
            <person name="Hendricks S."/>
            <person name="Wang Y."/>
            <person name="Chaplin M.D."/>
            <person name="Akan D."/>
            <person name="Paik S."/>
            <person name="Peterson D.L."/>
            <person name="Macrina F.L."/>
            <person name="Buck G.A."/>
        </authorList>
    </citation>
    <scope>NUCLEOTIDE SEQUENCE [LARGE SCALE GENOMIC DNA]</scope>
    <source>
        <strain>SK36</strain>
    </source>
</reference>